<evidence type="ECO:0000250" key="1"/>
<evidence type="ECO:0000255" key="2">
    <source>
        <dbReference type="PROSITE-ProRule" id="PRU00258"/>
    </source>
</evidence>
<evidence type="ECO:0000305" key="3"/>
<sequence>MTATFDKVADIIAETSEIDRATITPESHTIDDLGIDSLDFLDIVFAIDKEFGIKIPLEKWTQEVNEGKVSTEEYFVLKNLCAKIDELKAAKA</sequence>
<dbReference type="EMBL" id="AF083916">
    <property type="protein sequence ID" value="AAC34462.1"/>
    <property type="molecule type" value="Genomic_DNA"/>
</dbReference>
<dbReference type="EMBL" id="CP000133">
    <property type="protein sequence ID" value="ABC91255.1"/>
    <property type="status" value="ALT_INIT"/>
    <property type="molecule type" value="Genomic_DNA"/>
</dbReference>
<dbReference type="RefSeq" id="WP_003540486.1">
    <property type="nucleotide sequence ID" value="NC_007761.1"/>
</dbReference>
<dbReference type="SMR" id="P0A2W4"/>
<dbReference type="KEGG" id="ret:RHE_CH02478"/>
<dbReference type="eggNOG" id="COG0236">
    <property type="taxonomic scope" value="Bacteria"/>
</dbReference>
<dbReference type="HOGENOM" id="CLU_2234373_0_0_5"/>
<dbReference type="UniPathway" id="UPA00360"/>
<dbReference type="Proteomes" id="UP000001936">
    <property type="component" value="Chromosome"/>
</dbReference>
<dbReference type="GO" id="GO:0005829">
    <property type="term" value="C:cytosol"/>
    <property type="evidence" value="ECO:0007669"/>
    <property type="project" value="TreeGrafter"/>
</dbReference>
<dbReference type="GO" id="GO:0016020">
    <property type="term" value="C:membrane"/>
    <property type="evidence" value="ECO:0007669"/>
    <property type="project" value="GOC"/>
</dbReference>
<dbReference type="GO" id="GO:0000035">
    <property type="term" value="F:acyl binding"/>
    <property type="evidence" value="ECO:0007669"/>
    <property type="project" value="TreeGrafter"/>
</dbReference>
<dbReference type="GO" id="GO:0000036">
    <property type="term" value="F:acyl carrier activity"/>
    <property type="evidence" value="ECO:0007669"/>
    <property type="project" value="TreeGrafter"/>
</dbReference>
<dbReference type="GO" id="GO:0036104">
    <property type="term" value="P:Kdo2-lipid A biosynthetic process"/>
    <property type="evidence" value="ECO:0007669"/>
    <property type="project" value="UniProtKB-UniPathway"/>
</dbReference>
<dbReference type="GO" id="GO:0009245">
    <property type="term" value="P:lipid A biosynthetic process"/>
    <property type="evidence" value="ECO:0007669"/>
    <property type="project" value="UniProtKB-KW"/>
</dbReference>
<dbReference type="Gene3D" id="1.10.1200.10">
    <property type="entry name" value="ACP-like"/>
    <property type="match status" value="1"/>
</dbReference>
<dbReference type="InterPro" id="IPR003231">
    <property type="entry name" value="ACP"/>
</dbReference>
<dbReference type="InterPro" id="IPR036736">
    <property type="entry name" value="ACP-like_sf"/>
</dbReference>
<dbReference type="InterPro" id="IPR009081">
    <property type="entry name" value="PP-bd_ACP"/>
</dbReference>
<dbReference type="InterPro" id="IPR006162">
    <property type="entry name" value="Ppantetheine_attach_site"/>
</dbReference>
<dbReference type="NCBIfam" id="NF005079">
    <property type="entry name" value="PRK06508.1"/>
    <property type="match status" value="1"/>
</dbReference>
<dbReference type="PANTHER" id="PTHR20863">
    <property type="entry name" value="ACYL CARRIER PROTEIN"/>
    <property type="match status" value="1"/>
</dbReference>
<dbReference type="PANTHER" id="PTHR20863:SF76">
    <property type="entry name" value="CARRIER DOMAIN-CONTAINING PROTEIN"/>
    <property type="match status" value="1"/>
</dbReference>
<dbReference type="Pfam" id="PF00550">
    <property type="entry name" value="PP-binding"/>
    <property type="match status" value="1"/>
</dbReference>
<dbReference type="SUPFAM" id="SSF47336">
    <property type="entry name" value="ACP-like"/>
    <property type="match status" value="1"/>
</dbReference>
<dbReference type="PROSITE" id="PS50075">
    <property type="entry name" value="CARRIER"/>
    <property type="match status" value="1"/>
</dbReference>
<dbReference type="PROSITE" id="PS00012">
    <property type="entry name" value="PHOSPHOPANTETHEINE"/>
    <property type="match status" value="1"/>
</dbReference>
<feature type="initiator methionine" description="Removed" evidence="1">
    <location>
        <position position="1"/>
    </location>
</feature>
<feature type="chain" id="PRO_0000180239" description="Acyl carrier protein AcpXL">
    <location>
        <begin position="2"/>
        <end position="92"/>
    </location>
</feature>
<feature type="domain" description="Carrier" evidence="2">
    <location>
        <begin position="2"/>
        <end position="88"/>
    </location>
</feature>
<feature type="modified residue" description="O-(pantetheine 4'-phosphoryl)serine" evidence="2">
    <location>
        <position position="37"/>
    </location>
</feature>
<name>ACPXL_RHIEC</name>
<accession>P0A2W4</accession>
<accession>O88153</accession>
<accession>P24901</accession>
<accession>Q2K7D1</accession>
<proteinExistence type="inferred from homology"/>
<organism>
    <name type="scientific">Rhizobium etli (strain ATCC 51251 / DSM 11541 / JCM 21823 / NBRC 15573 / CFN 42)</name>
    <dbReference type="NCBI Taxonomy" id="347834"/>
    <lineage>
        <taxon>Bacteria</taxon>
        <taxon>Pseudomonadati</taxon>
        <taxon>Pseudomonadota</taxon>
        <taxon>Alphaproteobacteria</taxon>
        <taxon>Hyphomicrobiales</taxon>
        <taxon>Rhizobiaceae</taxon>
        <taxon>Rhizobium/Agrobacterium group</taxon>
        <taxon>Rhizobium</taxon>
    </lineage>
</organism>
<reference key="1">
    <citation type="journal article" date="2001" name="J. Bacteriol.">
        <title>Regulation of gene expression in response to oxygen in Rhizobium etli: role of FnrN in fixNOQP expression and in symbiotic nitrogen fixation.</title>
        <authorList>
            <person name="Lopez O."/>
            <person name="Morera C."/>
            <person name="Miranda-Rios J."/>
            <person name="Girard L."/>
            <person name="Romero D."/>
            <person name="Soberon M."/>
        </authorList>
    </citation>
    <scope>NUCLEOTIDE SEQUENCE [GENOMIC DNA]</scope>
    <source>
        <strain>CE3</strain>
    </source>
</reference>
<reference key="2">
    <citation type="journal article" date="2006" name="Proc. Natl. Acad. Sci. U.S.A.">
        <title>The partitioned Rhizobium etli genome: genetic and metabolic redundancy in seven interacting replicons.</title>
        <authorList>
            <person name="Gonzalez V."/>
            <person name="Santamaria R.I."/>
            <person name="Bustos P."/>
            <person name="Hernandez-Gonzalez I."/>
            <person name="Medrano-Soto A."/>
            <person name="Moreno-Hagelsieb G."/>
            <person name="Janga S.C."/>
            <person name="Ramirez M.A."/>
            <person name="Jimenez-Jacinto V."/>
            <person name="Collado-Vides J."/>
            <person name="Davila G."/>
        </authorList>
    </citation>
    <scope>NUCLEOTIDE SEQUENCE [LARGE SCALE GENOMIC DNA]</scope>
    <source>
        <strain>ATCC 51251 / DSM 11541 / JCM 21823 / NBRC 15573 / CFN 42</strain>
    </source>
</reference>
<gene>
    <name type="primary">acpXL</name>
    <name type="ordered locus">RHE_CH02478</name>
</gene>
<keyword id="KW-0963">Cytoplasm</keyword>
<keyword id="KW-0275">Fatty acid biosynthesis</keyword>
<keyword id="KW-0276">Fatty acid metabolism</keyword>
<keyword id="KW-0441">Lipid A biosynthesis</keyword>
<keyword id="KW-0444">Lipid biosynthesis</keyword>
<keyword id="KW-0443">Lipid metabolism</keyword>
<keyword id="KW-0596">Phosphopantetheine</keyword>
<keyword id="KW-0597">Phosphoprotein</keyword>
<keyword id="KW-1185">Reference proteome</keyword>
<protein>
    <recommendedName>
        <fullName>Acyl carrier protein AcpXL</fullName>
    </recommendedName>
    <alternativeName>
        <fullName>ORF*</fullName>
    </alternativeName>
</protein>
<comment type="function">
    <text evidence="1">Carrier of the growing fatty acid chain in fatty acid biosynthesis. Is involved in the transfer of long hydroxylated fatty acids to lipid A. Is acylated predominantly with 27-hydroxyoctacosanoic acid (By similarity).</text>
</comment>
<comment type="pathway">
    <text>Glycolipid biosynthesis; KDO(2)-lipid A biosynthesis.</text>
</comment>
<comment type="subcellular location">
    <subcellularLocation>
        <location evidence="1">Cytoplasm</location>
    </subcellularLocation>
</comment>
<comment type="PTM">
    <text evidence="1">4'-phosphopantetheine is transferred from CoA to a specific serine of apo-ACP by AcpS. This modification is essential for activity because fatty acids are bound in thioester linkage to the sulfhydryl of the prosthetic group (By similarity).</text>
</comment>
<comment type="sequence caution" evidence="3">
    <conflict type="erroneous initiation">
        <sequence resource="EMBL-CDS" id="ABC91255"/>
    </conflict>
    <text>Extended N-terminus.</text>
</comment>